<comment type="function">
    <text evidence="1">Converts seryl-tRNA(Sec) to selenocysteinyl-tRNA(Sec) required for selenoprotein biosynthesis.</text>
</comment>
<comment type="catalytic activity">
    <reaction evidence="1">
        <text>L-seryl-tRNA(Sec) + selenophosphate + H(+) = L-selenocysteinyl-tRNA(Sec) + phosphate</text>
        <dbReference type="Rhea" id="RHEA:22728"/>
        <dbReference type="Rhea" id="RHEA-COMP:9742"/>
        <dbReference type="Rhea" id="RHEA-COMP:9743"/>
        <dbReference type="ChEBI" id="CHEBI:15378"/>
        <dbReference type="ChEBI" id="CHEBI:16144"/>
        <dbReference type="ChEBI" id="CHEBI:43474"/>
        <dbReference type="ChEBI" id="CHEBI:78533"/>
        <dbReference type="ChEBI" id="CHEBI:78573"/>
        <dbReference type="EC" id="2.9.1.1"/>
    </reaction>
</comment>
<comment type="cofactor">
    <cofactor evidence="1">
        <name>pyridoxal 5'-phosphate</name>
        <dbReference type="ChEBI" id="CHEBI:597326"/>
    </cofactor>
</comment>
<comment type="pathway">
    <text evidence="1">Aminoacyl-tRNA biosynthesis; selenocysteinyl-tRNA(Sec) biosynthesis; selenocysteinyl-tRNA(Sec) from L-seryl-tRNA(Sec) (bacterial route): step 1/1.</text>
</comment>
<comment type="subunit">
    <text evidence="1">Homodecamer; pentamer of dimers. Binds only one seryl-tRNA(Sec) per dimer.</text>
</comment>
<comment type="subcellular location">
    <subcellularLocation>
        <location evidence="1">Cytoplasm</location>
    </subcellularLocation>
</comment>
<comment type="similarity">
    <text evidence="1">Belongs to the SelA family.</text>
</comment>
<evidence type="ECO:0000255" key="1">
    <source>
        <dbReference type="HAMAP-Rule" id="MF_00423"/>
    </source>
</evidence>
<organism>
    <name type="scientific">Escherichia coli (strain UTI89 / UPEC)</name>
    <dbReference type="NCBI Taxonomy" id="364106"/>
    <lineage>
        <taxon>Bacteria</taxon>
        <taxon>Pseudomonadati</taxon>
        <taxon>Pseudomonadota</taxon>
        <taxon>Gammaproteobacteria</taxon>
        <taxon>Enterobacterales</taxon>
        <taxon>Enterobacteriaceae</taxon>
        <taxon>Escherichia</taxon>
    </lineage>
</organism>
<gene>
    <name evidence="1" type="primary">selA</name>
    <name type="ordered locus">UTI89_C4133</name>
</gene>
<protein>
    <recommendedName>
        <fullName evidence="1">L-seryl-tRNA(Sec) selenium transferase</fullName>
        <ecNumber evidence="1">2.9.1.1</ecNumber>
    </recommendedName>
    <alternativeName>
        <fullName evidence="1">Selenocysteine synthase</fullName>
        <shortName evidence="1">Sec synthase</shortName>
    </alternativeName>
    <alternativeName>
        <fullName evidence="1">Selenocysteinyl-tRNA(Sec) synthase</fullName>
    </alternativeName>
</protein>
<name>SELA_ECOUT</name>
<accession>Q1R503</accession>
<sequence>MTTETRSLYSQLPAIDRLLRDSSFLSLRDTYGHTRVVELLRQMLDEAREVIRDSQTLPAWCENWAQEVDARLTKEAQSALRPVINLTGTVLHTNLGRALQAEAAVEAVTKAMRSPVTLEYDLDDAGRGHRDRALAQLLCRITGAEDACIVNNNAAAVLLMLAATASGKEVVVSRGELVEIGGAFRIPDVMRQAGCTLHEVGTTNRTHANDYRQAVNENTALLMKVHTSNYSIQGFTKAIDEAELVALGKELDVPVVTDLGSGSLVDLSQYGLPKEPMPQELIAAGVSLVSFSGDKLLGGPQAGIIVGKKEMIARLQSHPLKRALRADKMTLAALEATLRLYLHPEALSEKLPTLRLLTRSAEVIQIQAQRLQAPLAAHYGAEFAVQVMPCLSQIGSGSLPVDRLPSAALTFTPHDGRGSHLESLAARWRELPVPVIGRIYDGRLWLDLRCLEDEQRFLEMLLK</sequence>
<proteinExistence type="inferred from homology"/>
<reference key="1">
    <citation type="journal article" date="2006" name="Proc. Natl. Acad. Sci. U.S.A.">
        <title>Identification of genes subject to positive selection in uropathogenic strains of Escherichia coli: a comparative genomics approach.</title>
        <authorList>
            <person name="Chen S.L."/>
            <person name="Hung C.-S."/>
            <person name="Xu J."/>
            <person name="Reigstad C.S."/>
            <person name="Magrini V."/>
            <person name="Sabo A."/>
            <person name="Blasiar D."/>
            <person name="Bieri T."/>
            <person name="Meyer R.R."/>
            <person name="Ozersky P."/>
            <person name="Armstrong J.R."/>
            <person name="Fulton R.S."/>
            <person name="Latreille J.P."/>
            <person name="Spieth J."/>
            <person name="Hooton T.M."/>
            <person name="Mardis E.R."/>
            <person name="Hultgren S.J."/>
            <person name="Gordon J.I."/>
        </authorList>
    </citation>
    <scope>NUCLEOTIDE SEQUENCE [LARGE SCALE GENOMIC DNA]</scope>
    <source>
        <strain>UTI89 / UPEC</strain>
    </source>
</reference>
<keyword id="KW-0963">Cytoplasm</keyword>
<keyword id="KW-0648">Protein biosynthesis</keyword>
<keyword id="KW-0663">Pyridoxal phosphate</keyword>
<keyword id="KW-0711">Selenium</keyword>
<keyword id="KW-0808">Transferase</keyword>
<dbReference type="EC" id="2.9.1.1" evidence="1"/>
<dbReference type="EMBL" id="CP000243">
    <property type="protein sequence ID" value="ABE09561.1"/>
    <property type="molecule type" value="Genomic_DNA"/>
</dbReference>
<dbReference type="RefSeq" id="WP_000206261.1">
    <property type="nucleotide sequence ID" value="NZ_CP064825.1"/>
</dbReference>
<dbReference type="SMR" id="Q1R503"/>
<dbReference type="KEGG" id="eci:UTI89_C4133"/>
<dbReference type="HOGENOM" id="CLU_038142_1_0_6"/>
<dbReference type="UniPathway" id="UPA00906">
    <property type="reaction ID" value="UER00896"/>
</dbReference>
<dbReference type="Proteomes" id="UP000001952">
    <property type="component" value="Chromosome"/>
</dbReference>
<dbReference type="GO" id="GO:0005737">
    <property type="term" value="C:cytoplasm"/>
    <property type="evidence" value="ECO:0007669"/>
    <property type="project" value="UniProtKB-SubCell"/>
</dbReference>
<dbReference type="GO" id="GO:0004125">
    <property type="term" value="F:L-seryl-tRNA(Sec) selenium transferase activity"/>
    <property type="evidence" value="ECO:0007669"/>
    <property type="project" value="UniProtKB-UniRule"/>
</dbReference>
<dbReference type="GO" id="GO:0001717">
    <property type="term" value="P:conversion of seryl-tRNAsec to selenocys-tRNAsec"/>
    <property type="evidence" value="ECO:0007669"/>
    <property type="project" value="UniProtKB-UniRule"/>
</dbReference>
<dbReference type="GO" id="GO:0001514">
    <property type="term" value="P:selenocysteine incorporation"/>
    <property type="evidence" value="ECO:0007669"/>
    <property type="project" value="UniProtKB-UniRule"/>
</dbReference>
<dbReference type="FunFam" id="3.40.640.10:FF:000028">
    <property type="entry name" value="L-seryl-tRNA(Sec) selenium transferase"/>
    <property type="match status" value="1"/>
</dbReference>
<dbReference type="FunFam" id="3.90.1150.180:FF:000001">
    <property type="entry name" value="L-seryl-tRNA(Sec) selenium transferase"/>
    <property type="match status" value="1"/>
</dbReference>
<dbReference type="Gene3D" id="3.90.1150.180">
    <property type="match status" value="1"/>
</dbReference>
<dbReference type="Gene3D" id="3.40.640.10">
    <property type="entry name" value="Type I PLP-dependent aspartate aminotransferase-like (Major domain)"/>
    <property type="match status" value="1"/>
</dbReference>
<dbReference type="HAMAP" id="MF_00423">
    <property type="entry name" value="SelA"/>
    <property type="match status" value="1"/>
</dbReference>
<dbReference type="InterPro" id="IPR015424">
    <property type="entry name" value="PyrdxlP-dep_Trfase"/>
</dbReference>
<dbReference type="InterPro" id="IPR015421">
    <property type="entry name" value="PyrdxlP-dep_Trfase_major"/>
</dbReference>
<dbReference type="InterPro" id="IPR018319">
    <property type="entry name" value="SelA-like"/>
</dbReference>
<dbReference type="InterPro" id="IPR004534">
    <property type="entry name" value="SelA_trans"/>
</dbReference>
<dbReference type="InterPro" id="IPR025862">
    <property type="entry name" value="SelA_trans_N_dom"/>
</dbReference>
<dbReference type="NCBIfam" id="TIGR00474">
    <property type="entry name" value="selA"/>
    <property type="match status" value="1"/>
</dbReference>
<dbReference type="PANTHER" id="PTHR32328">
    <property type="entry name" value="L-SERYL-TRNA(SEC) SELENIUM TRANSFERASE"/>
    <property type="match status" value="1"/>
</dbReference>
<dbReference type="PANTHER" id="PTHR32328:SF0">
    <property type="entry name" value="L-SERYL-TRNA(SEC) SELENIUM TRANSFERASE"/>
    <property type="match status" value="1"/>
</dbReference>
<dbReference type="Pfam" id="PF12390">
    <property type="entry name" value="Se-cys_synth_N"/>
    <property type="match status" value="1"/>
</dbReference>
<dbReference type="Pfam" id="PF03841">
    <property type="entry name" value="SelA"/>
    <property type="match status" value="1"/>
</dbReference>
<dbReference type="SUPFAM" id="SSF53383">
    <property type="entry name" value="PLP-dependent transferases"/>
    <property type="match status" value="1"/>
</dbReference>
<feature type="chain" id="PRO_1000050365" description="L-seryl-tRNA(Sec) selenium transferase">
    <location>
        <begin position="1"/>
        <end position="463"/>
    </location>
</feature>
<feature type="modified residue" description="N6-(pyridoxal phosphate)lysine" evidence="1">
    <location>
        <position position="295"/>
    </location>
</feature>